<keyword id="KW-0378">Hydrolase</keyword>
<keyword id="KW-0441">Lipid A biosynthesis</keyword>
<keyword id="KW-0444">Lipid biosynthesis</keyword>
<keyword id="KW-0443">Lipid metabolism</keyword>
<keyword id="KW-0479">Metal-binding</keyword>
<keyword id="KW-0862">Zinc</keyword>
<feature type="chain" id="PRO_1000072210" description="UDP-3-O-acyl-N-acetylglucosamine deacetylase">
    <location>
        <begin position="1"/>
        <end position="294"/>
    </location>
</feature>
<feature type="active site" description="Proton donor" evidence="1">
    <location>
        <position position="259"/>
    </location>
</feature>
<feature type="binding site" evidence="1">
    <location>
        <position position="75"/>
    </location>
    <ligand>
        <name>Zn(2+)</name>
        <dbReference type="ChEBI" id="CHEBI:29105"/>
    </ligand>
</feature>
<feature type="binding site" evidence="1">
    <location>
        <position position="232"/>
    </location>
    <ligand>
        <name>Zn(2+)</name>
        <dbReference type="ChEBI" id="CHEBI:29105"/>
    </ligand>
</feature>
<feature type="binding site" evidence="1">
    <location>
        <position position="236"/>
    </location>
    <ligand>
        <name>Zn(2+)</name>
        <dbReference type="ChEBI" id="CHEBI:29105"/>
    </ligand>
</feature>
<protein>
    <recommendedName>
        <fullName evidence="1">UDP-3-O-acyl-N-acetylglucosamine deacetylase</fullName>
        <shortName evidence="1">UDP-3-O-acyl-GlcNAc deacetylase</shortName>
        <ecNumber evidence="1">3.5.1.108</ecNumber>
    </recommendedName>
    <alternativeName>
        <fullName evidence="1">UDP-3-O-[R-3-hydroxymyristoyl]-N-acetylglucosamine deacetylase</fullName>
    </alternativeName>
</protein>
<reference key="1">
    <citation type="journal article" date="2007" name="J. Bacteriol.">
        <title>The complete genome sequence of Campylobacter jejuni strain 81116 (NCTC11828).</title>
        <authorList>
            <person name="Pearson B.M."/>
            <person name="Gaskin D.J.H."/>
            <person name="Segers R.P.A.M."/>
            <person name="Wells J.M."/>
            <person name="Nuijten P.J.M."/>
            <person name="van Vliet A.H.M."/>
        </authorList>
    </citation>
    <scope>NUCLEOTIDE SEQUENCE [LARGE SCALE GENOMIC DNA]</scope>
    <source>
        <strain>81116 / NCTC 11828</strain>
    </source>
</reference>
<gene>
    <name evidence="1" type="primary">lpxC</name>
    <name type="ordered locus">C8J_0125</name>
</gene>
<comment type="function">
    <text evidence="1">Catalyzes the hydrolysis of UDP-3-O-myristoyl-N-acetylglucosamine to form UDP-3-O-myristoylglucosamine and acetate, the committed step in lipid A biosynthesis.</text>
</comment>
<comment type="catalytic activity">
    <reaction evidence="1">
        <text>a UDP-3-O-[(3R)-3-hydroxyacyl]-N-acetyl-alpha-D-glucosamine + H2O = a UDP-3-O-[(3R)-3-hydroxyacyl]-alpha-D-glucosamine + acetate</text>
        <dbReference type="Rhea" id="RHEA:67816"/>
        <dbReference type="ChEBI" id="CHEBI:15377"/>
        <dbReference type="ChEBI" id="CHEBI:30089"/>
        <dbReference type="ChEBI" id="CHEBI:137740"/>
        <dbReference type="ChEBI" id="CHEBI:173225"/>
        <dbReference type="EC" id="3.5.1.108"/>
    </reaction>
</comment>
<comment type="cofactor">
    <cofactor evidence="1">
        <name>Zn(2+)</name>
        <dbReference type="ChEBI" id="CHEBI:29105"/>
    </cofactor>
</comment>
<comment type="pathway">
    <text evidence="1">Glycolipid biosynthesis; lipid IV(A) biosynthesis; lipid IV(A) from (3R)-3-hydroxytetradecanoyl-[acyl-carrier-protein] and UDP-N-acetyl-alpha-D-glucosamine: step 2/6.</text>
</comment>
<comment type="similarity">
    <text evidence="1">Belongs to the LpxC family.</text>
</comment>
<name>LPXC_CAMJ8</name>
<dbReference type="EC" id="3.5.1.108" evidence="1"/>
<dbReference type="EMBL" id="CP000814">
    <property type="protein sequence ID" value="ABV51724.1"/>
    <property type="molecule type" value="Genomic_DNA"/>
</dbReference>
<dbReference type="RefSeq" id="WP_002866743.1">
    <property type="nucleotide sequence ID" value="NC_009839.1"/>
</dbReference>
<dbReference type="SMR" id="A8FJT7"/>
<dbReference type="KEGG" id="cju:C8J_0125"/>
<dbReference type="HOGENOM" id="CLU_046528_1_0_7"/>
<dbReference type="UniPathway" id="UPA00359">
    <property type="reaction ID" value="UER00478"/>
</dbReference>
<dbReference type="GO" id="GO:0016020">
    <property type="term" value="C:membrane"/>
    <property type="evidence" value="ECO:0007669"/>
    <property type="project" value="GOC"/>
</dbReference>
<dbReference type="GO" id="GO:0046872">
    <property type="term" value="F:metal ion binding"/>
    <property type="evidence" value="ECO:0007669"/>
    <property type="project" value="UniProtKB-KW"/>
</dbReference>
<dbReference type="GO" id="GO:0103117">
    <property type="term" value="F:UDP-3-O-acyl-N-acetylglucosamine deacetylase activity"/>
    <property type="evidence" value="ECO:0007669"/>
    <property type="project" value="UniProtKB-UniRule"/>
</dbReference>
<dbReference type="GO" id="GO:0009245">
    <property type="term" value="P:lipid A biosynthetic process"/>
    <property type="evidence" value="ECO:0007669"/>
    <property type="project" value="UniProtKB-UniRule"/>
</dbReference>
<dbReference type="Gene3D" id="3.30.230.20">
    <property type="entry name" value="lpxc deacetylase, domain 1"/>
    <property type="match status" value="1"/>
</dbReference>
<dbReference type="Gene3D" id="3.30.1700.10">
    <property type="entry name" value="lpxc deacetylase, domain 2"/>
    <property type="match status" value="1"/>
</dbReference>
<dbReference type="HAMAP" id="MF_00388">
    <property type="entry name" value="LpxC"/>
    <property type="match status" value="1"/>
</dbReference>
<dbReference type="InterPro" id="IPR020568">
    <property type="entry name" value="Ribosomal_Su5_D2-typ_SF"/>
</dbReference>
<dbReference type="InterPro" id="IPR004463">
    <property type="entry name" value="UDP-acyl_GlcNac_deAcase"/>
</dbReference>
<dbReference type="InterPro" id="IPR011334">
    <property type="entry name" value="UDP-acyl_GlcNac_deAcase_C"/>
</dbReference>
<dbReference type="InterPro" id="IPR015870">
    <property type="entry name" value="UDP-acyl_N-AcGlcN_deAcase_N"/>
</dbReference>
<dbReference type="NCBIfam" id="TIGR00325">
    <property type="entry name" value="lpxC"/>
    <property type="match status" value="1"/>
</dbReference>
<dbReference type="PANTHER" id="PTHR33694">
    <property type="entry name" value="UDP-3-O-ACYL-N-ACETYLGLUCOSAMINE DEACETYLASE 1, MITOCHONDRIAL-RELATED"/>
    <property type="match status" value="1"/>
</dbReference>
<dbReference type="PANTHER" id="PTHR33694:SF1">
    <property type="entry name" value="UDP-3-O-ACYL-N-ACETYLGLUCOSAMINE DEACETYLASE 1, MITOCHONDRIAL-RELATED"/>
    <property type="match status" value="1"/>
</dbReference>
<dbReference type="Pfam" id="PF03331">
    <property type="entry name" value="LpxC"/>
    <property type="match status" value="1"/>
</dbReference>
<dbReference type="SUPFAM" id="SSF54211">
    <property type="entry name" value="Ribosomal protein S5 domain 2-like"/>
    <property type="match status" value="2"/>
</dbReference>
<proteinExistence type="inferred from homology"/>
<accession>A8FJT7</accession>
<organism>
    <name type="scientific">Campylobacter jejuni subsp. jejuni serotype O:6 (strain 81116 / NCTC 11828)</name>
    <dbReference type="NCBI Taxonomy" id="407148"/>
    <lineage>
        <taxon>Bacteria</taxon>
        <taxon>Pseudomonadati</taxon>
        <taxon>Campylobacterota</taxon>
        <taxon>Epsilonproteobacteria</taxon>
        <taxon>Campylobacterales</taxon>
        <taxon>Campylobacteraceae</taxon>
        <taxon>Campylobacter</taxon>
    </lineage>
</organism>
<evidence type="ECO:0000255" key="1">
    <source>
        <dbReference type="HAMAP-Rule" id="MF_00388"/>
    </source>
</evidence>
<sequence>MKQLTLAKTVKGVGIGLHKGEPIEITLEPLEANSGIVFFRSDLNASYKASPENVINTQMATVLGDDRGFISTIEHLMSAINAYGIDNVRIVLNANEAPVMDGSSISFCMMLDEAGVKELDAPKKIMVIKKPVEVRDGNKFVRLTPTKEPRINYTIKFDNAVIGEQSYNFEFSKKNYIENIARARTFGFLKDVQALRSMNLALGGSLENTIVVDENRILNPEGLRFKDEFVRHKILDAIGDLTLLGYRVFGDYISYAGSHHLNHLLTKEVLKDKDAYEIVSLEKTTQKAYEKVFA</sequence>